<feature type="chain" id="PRO_1000135484" description="o-succinylbenzoate synthase">
    <location>
        <begin position="1"/>
        <end position="320"/>
    </location>
</feature>
<feature type="active site" description="Proton donor" evidence="1">
    <location>
        <position position="133"/>
    </location>
</feature>
<feature type="active site" description="Proton acceptor" evidence="1">
    <location>
        <position position="235"/>
    </location>
</feature>
<feature type="binding site" evidence="1">
    <location>
        <position position="161"/>
    </location>
    <ligand>
        <name>Mg(2+)</name>
        <dbReference type="ChEBI" id="CHEBI:18420"/>
    </ligand>
</feature>
<feature type="binding site" evidence="1">
    <location>
        <position position="190"/>
    </location>
    <ligand>
        <name>Mg(2+)</name>
        <dbReference type="ChEBI" id="CHEBI:18420"/>
    </ligand>
</feature>
<feature type="binding site" evidence="1">
    <location>
        <position position="213"/>
    </location>
    <ligand>
        <name>Mg(2+)</name>
        <dbReference type="ChEBI" id="CHEBI:18420"/>
    </ligand>
</feature>
<proteinExistence type="inferred from homology"/>
<accession>B7UFS4</accession>
<reference key="1">
    <citation type="journal article" date="2009" name="J. Bacteriol.">
        <title>Complete genome sequence and comparative genome analysis of enteropathogenic Escherichia coli O127:H6 strain E2348/69.</title>
        <authorList>
            <person name="Iguchi A."/>
            <person name="Thomson N.R."/>
            <person name="Ogura Y."/>
            <person name="Saunders D."/>
            <person name="Ooka T."/>
            <person name="Henderson I.R."/>
            <person name="Harris D."/>
            <person name="Asadulghani M."/>
            <person name="Kurokawa K."/>
            <person name="Dean P."/>
            <person name="Kenny B."/>
            <person name="Quail M.A."/>
            <person name="Thurston S."/>
            <person name="Dougan G."/>
            <person name="Hayashi T."/>
            <person name="Parkhill J."/>
            <person name="Frankel G."/>
        </authorList>
    </citation>
    <scope>NUCLEOTIDE SEQUENCE [LARGE SCALE GENOMIC DNA]</scope>
    <source>
        <strain>E2348/69 / EPEC</strain>
    </source>
</reference>
<protein>
    <recommendedName>
        <fullName evidence="1">o-succinylbenzoate synthase</fullName>
        <shortName evidence="1">OSB synthase</shortName>
        <shortName evidence="1">OSBS</shortName>
        <ecNumber evidence="1">4.2.1.113</ecNumber>
    </recommendedName>
    <alternativeName>
        <fullName evidence="1">4-(2'-carboxyphenyl)-4-oxybutyric acid synthase</fullName>
    </alternativeName>
    <alternativeName>
        <fullName evidence="1">o-succinylbenzoic acid synthase</fullName>
    </alternativeName>
</protein>
<dbReference type="EC" id="4.2.1.113" evidence="1"/>
<dbReference type="EMBL" id="FM180568">
    <property type="protein sequence ID" value="CAS09954.1"/>
    <property type="molecule type" value="Genomic_DNA"/>
</dbReference>
<dbReference type="RefSeq" id="WP_001255593.1">
    <property type="nucleotide sequence ID" value="NC_011601.1"/>
</dbReference>
<dbReference type="SMR" id="B7UFS4"/>
<dbReference type="KEGG" id="ecg:E2348C_2406"/>
<dbReference type="HOGENOM" id="CLU_030273_0_1_6"/>
<dbReference type="UniPathway" id="UPA00079"/>
<dbReference type="UniPathway" id="UPA01057">
    <property type="reaction ID" value="UER00165"/>
</dbReference>
<dbReference type="Proteomes" id="UP000008205">
    <property type="component" value="Chromosome"/>
</dbReference>
<dbReference type="GO" id="GO:0000287">
    <property type="term" value="F:magnesium ion binding"/>
    <property type="evidence" value="ECO:0007669"/>
    <property type="project" value="UniProtKB-UniRule"/>
</dbReference>
<dbReference type="GO" id="GO:0043748">
    <property type="term" value="F:O-succinylbenzoate synthase activity"/>
    <property type="evidence" value="ECO:0007669"/>
    <property type="project" value="UniProtKB-EC"/>
</dbReference>
<dbReference type="GO" id="GO:0009234">
    <property type="term" value="P:menaquinone biosynthetic process"/>
    <property type="evidence" value="ECO:0007669"/>
    <property type="project" value="UniProtKB-UniRule"/>
</dbReference>
<dbReference type="CDD" id="cd03320">
    <property type="entry name" value="OSBS"/>
    <property type="match status" value="1"/>
</dbReference>
<dbReference type="FunFam" id="3.20.20.120:FF:000006">
    <property type="entry name" value="o-succinylbenzoate synthase"/>
    <property type="match status" value="1"/>
</dbReference>
<dbReference type="FunFam" id="3.30.390.10:FF:000005">
    <property type="entry name" value="o-succinylbenzoate synthase"/>
    <property type="match status" value="1"/>
</dbReference>
<dbReference type="Gene3D" id="3.20.20.120">
    <property type="entry name" value="Enolase-like C-terminal domain"/>
    <property type="match status" value="1"/>
</dbReference>
<dbReference type="Gene3D" id="3.30.390.10">
    <property type="entry name" value="Enolase-like, N-terminal domain"/>
    <property type="match status" value="1"/>
</dbReference>
<dbReference type="HAMAP" id="MF_00470">
    <property type="entry name" value="MenC_1"/>
    <property type="match status" value="1"/>
</dbReference>
<dbReference type="InterPro" id="IPR036849">
    <property type="entry name" value="Enolase-like_C_sf"/>
</dbReference>
<dbReference type="InterPro" id="IPR029017">
    <property type="entry name" value="Enolase-like_N"/>
</dbReference>
<dbReference type="InterPro" id="IPR029065">
    <property type="entry name" value="Enolase_C-like"/>
</dbReference>
<dbReference type="InterPro" id="IPR013342">
    <property type="entry name" value="Mandelate_racemase_C"/>
</dbReference>
<dbReference type="InterPro" id="IPR010196">
    <property type="entry name" value="OSB_synthase_MenC1"/>
</dbReference>
<dbReference type="InterPro" id="IPR041338">
    <property type="entry name" value="OSBS_N"/>
</dbReference>
<dbReference type="NCBIfam" id="TIGR01927">
    <property type="entry name" value="menC_gam_Gplu"/>
    <property type="match status" value="1"/>
</dbReference>
<dbReference type="NCBIfam" id="NF003473">
    <property type="entry name" value="PRK05105.1"/>
    <property type="match status" value="1"/>
</dbReference>
<dbReference type="PANTHER" id="PTHR48073:SF2">
    <property type="entry name" value="O-SUCCINYLBENZOATE SYNTHASE"/>
    <property type="match status" value="1"/>
</dbReference>
<dbReference type="PANTHER" id="PTHR48073">
    <property type="entry name" value="O-SUCCINYLBENZOATE SYNTHASE-RELATED"/>
    <property type="match status" value="1"/>
</dbReference>
<dbReference type="Pfam" id="PF21508">
    <property type="entry name" value="MenC_N"/>
    <property type="match status" value="1"/>
</dbReference>
<dbReference type="Pfam" id="PF13378">
    <property type="entry name" value="MR_MLE_C"/>
    <property type="match status" value="1"/>
</dbReference>
<dbReference type="SFLD" id="SFLDG00180">
    <property type="entry name" value="muconate_cycloisomerase"/>
    <property type="match status" value="1"/>
</dbReference>
<dbReference type="SFLD" id="SFLDF00009">
    <property type="entry name" value="o-succinylbenzoate_synthase"/>
    <property type="match status" value="1"/>
</dbReference>
<dbReference type="SMART" id="SM00922">
    <property type="entry name" value="MR_MLE"/>
    <property type="match status" value="1"/>
</dbReference>
<dbReference type="SUPFAM" id="SSF51604">
    <property type="entry name" value="Enolase C-terminal domain-like"/>
    <property type="match status" value="1"/>
</dbReference>
<dbReference type="SUPFAM" id="SSF54826">
    <property type="entry name" value="Enolase N-terminal domain-like"/>
    <property type="match status" value="1"/>
</dbReference>
<evidence type="ECO:0000255" key="1">
    <source>
        <dbReference type="HAMAP-Rule" id="MF_00470"/>
    </source>
</evidence>
<comment type="function">
    <text evidence="1">Converts 2-succinyl-6-hydroxy-2,4-cyclohexadiene-1-carboxylate (SHCHC) to 2-succinylbenzoate (OSB).</text>
</comment>
<comment type="catalytic activity">
    <reaction evidence="1">
        <text>(1R,6R)-6-hydroxy-2-succinyl-cyclohexa-2,4-diene-1-carboxylate = 2-succinylbenzoate + H2O</text>
        <dbReference type="Rhea" id="RHEA:10196"/>
        <dbReference type="ChEBI" id="CHEBI:15377"/>
        <dbReference type="ChEBI" id="CHEBI:18325"/>
        <dbReference type="ChEBI" id="CHEBI:58689"/>
        <dbReference type="EC" id="4.2.1.113"/>
    </reaction>
</comment>
<comment type="cofactor">
    <cofactor evidence="1">
        <name>a divalent metal cation</name>
        <dbReference type="ChEBI" id="CHEBI:60240"/>
    </cofactor>
</comment>
<comment type="pathway">
    <text evidence="1">Quinol/quinone metabolism; 1,4-dihydroxy-2-naphthoate biosynthesis; 1,4-dihydroxy-2-naphthoate from chorismate: step 4/7.</text>
</comment>
<comment type="pathway">
    <text evidence="1">Quinol/quinone metabolism; menaquinone biosynthesis.</text>
</comment>
<comment type="similarity">
    <text evidence="1">Belongs to the mandelate racemase/muconate lactonizing enzyme family. MenC type 1 subfamily.</text>
</comment>
<sequence length="320" mass="35455">MRSAQVYRWQIPMDAGVVLRDRRLKTRDGLYVCLREGEREGWGEISPLPGFSQETWEDAQSVLLAWVNNWLAGDCELPQMPSVAFGVSCALAELAETLPQAANYRAAPLCNGDPDDLILKLADMPGEKVAKVKVGLYEAVRDGMVVNLLLEAIPDLHLRLDANRAWTPLKGQQFAKYVNLDYRHRIAFLEEPCKTRDDSRAFARETGIAIAWDESLREPDFAFVAEEGVRAVVIKPTLTGSLDKVREQVQAAHALGLTAVISSSIESSLGLTQLARIAAWLTPDTIPGLDTLDLMQAQQVRRWPGSLLPLVDVDALEQLL</sequence>
<organism>
    <name type="scientific">Escherichia coli O127:H6 (strain E2348/69 / EPEC)</name>
    <dbReference type="NCBI Taxonomy" id="574521"/>
    <lineage>
        <taxon>Bacteria</taxon>
        <taxon>Pseudomonadati</taxon>
        <taxon>Pseudomonadota</taxon>
        <taxon>Gammaproteobacteria</taxon>
        <taxon>Enterobacterales</taxon>
        <taxon>Enterobacteriaceae</taxon>
        <taxon>Escherichia</taxon>
    </lineage>
</organism>
<gene>
    <name evidence="1" type="primary">menC</name>
    <name type="ordered locus">E2348C_2406</name>
</gene>
<name>MENC_ECO27</name>
<keyword id="KW-0456">Lyase</keyword>
<keyword id="KW-0460">Magnesium</keyword>
<keyword id="KW-0474">Menaquinone biosynthesis</keyword>
<keyword id="KW-0479">Metal-binding</keyword>
<keyword id="KW-1185">Reference proteome</keyword>